<gene>
    <name evidence="7" type="primary">CNGB3</name>
</gene>
<sequence>MFKSLTIKSNKVKPREENDENKQDPDPSNQPQQSTRQGENKSENKSLQTKMTPVTFEESHAKMQDKISEKNSLRDLTTNPNHQHPTESKGAMSEQKEMETGKEGLVSPKSKPLGVPVINEYADAQLHNLVRRMRQRTMLYKKKLAEGDISSPEASPQTAKPTAVPSTQESNAKLKEEHYYHILCFKFQKMPLTEYLKRFRLPGSIDSYTDRLYLLWLLLVTIAYNWNCWLIPLRLVFPYQTPDNTHYWFITDITCDIIYLCDMLLIQPRLQFIKGGDIMVDSNELKRHYRSSTKFQLDVASVMPFDVFYLFFGFNPVFRMNRILKYTSFFEFNHHLESIMDKAYIYRVIRTTGYLLYTLHINACIYYWASDYEGIGSTKWVYNGEGNKYLRCYYWAVRTLITIGGLPEPQTSFEIVFQLLNFFSGVFVFSSLIGQMQDVIGAATANQNNFRISMDHTISYMNTYSIPKNVQNRVRTWYEYTWDSQRMLDESDLLCTLPVTMQLALTVDVNLSIISKVELFKGCDTQMIYDMLLRLKSTVYLPGDFVCKKGEIGKEMYIIKQGEVQVLGGSDGAQVLVTLKAGAVFGEISLLAGRGGNRRTANVIAHGFANLLTLDKKTLQEILVHYPDSEKLLMKKASVLLKKKAPATETTPPRKGLAFLFPPKQETPKIFKALLGGTGKAGLTRLLKLKREQTIQKTSENSEEGGGKRREYEDKEREPSEKILDSSECRANCIIAEEMPQSIRRAALPRGTTRQSLIISMAPSAEAGEEVLTIEVKEKAKQ</sequence>
<evidence type="ECO:0000250" key="1">
    <source>
        <dbReference type="UniProtKB" id="Q28181"/>
    </source>
</evidence>
<evidence type="ECO:0000250" key="2">
    <source>
        <dbReference type="UniProtKB" id="Q9NQW8"/>
    </source>
</evidence>
<evidence type="ECO:0000255" key="3"/>
<evidence type="ECO:0000256" key="4">
    <source>
        <dbReference type="SAM" id="MobiDB-lite"/>
    </source>
</evidence>
<evidence type="ECO:0000269" key="5">
    <source>
    </source>
</evidence>
<evidence type="ECO:0000269" key="6">
    <source>
    </source>
</evidence>
<evidence type="ECO:0000303" key="7">
    <source>
    </source>
</evidence>
<evidence type="ECO:0000305" key="8"/>
<reference key="1">
    <citation type="journal article" date="2002" name="Hum. Mol. Genet.">
        <title>Canine CNGB3 mutations establish cone degeneration as orthologous to the human achromatopsia locus ACHM3.</title>
        <authorList>
            <person name="Sidjanin D.J."/>
            <person name="Lowe J.K."/>
            <person name="McElwee J.L."/>
            <person name="Milne B.S."/>
            <person name="Phippen T.M."/>
            <person name="Sargan D.R."/>
            <person name="Aguirre G.D."/>
            <person name="Acland G.M."/>
            <person name="Ostrander E.A."/>
        </authorList>
    </citation>
    <scope>NUCLEOTIDE SEQUENCE [MRNA]</scope>
    <scope>VARIANT CD ASN-262</scope>
</reference>
<reference key="2">
    <citation type="journal article" date="2006" name="Anim. Genet.">
        <title>Genetic heterogeneity of day blindness in Alaskan Malamutes.</title>
        <authorList>
            <person name="Seddon J.M."/>
            <person name="Hampson E.C.G.M."/>
            <person name="Smith R.I.E."/>
            <person name="Hughes I.P."/>
        </authorList>
    </citation>
    <scope>NUCLEOTIDE SEQUENCE [GENOMIC DNA]</scope>
    <source>
        <strain>Alaskan malamute</strain>
    </source>
</reference>
<reference key="3">
    <citation type="journal article" date="2001" name="Science">
        <title>Nomenclature for ion channel subunits.</title>
        <authorList>
            <person name="Bradley J."/>
            <person name="Frings S."/>
            <person name="Yau K.W."/>
            <person name="Reed R."/>
        </authorList>
    </citation>
    <scope>NOMENCLATURE</scope>
</reference>
<protein>
    <recommendedName>
        <fullName>Cyclic nucleotide-gated channel beta-3</fullName>
        <shortName>CNG channel beta-3</shortName>
    </recommendedName>
    <alternativeName>
        <fullName>Cone photoreceptor cGMP-gated channel subunit beta</fullName>
    </alternativeName>
    <alternativeName>
        <fullName>Cyclic nucleotide-gated cation channel beta-3</fullName>
    </alternativeName>
    <alternativeName>
        <fullName>Cyclic nucleotide-gated cation channel modulatory subunit</fullName>
    </alternativeName>
</protein>
<feature type="chain" id="PRO_0000219319" description="Cyclic nucleotide-gated channel beta-3">
    <location>
        <begin position="1"/>
        <end position="782"/>
    </location>
</feature>
<feature type="topological domain" description="Cytoplasmic" evidence="8">
    <location>
        <begin position="1"/>
        <end position="213"/>
    </location>
</feature>
<feature type="transmembrane region" description="Helical; Name=S1" evidence="2">
    <location>
        <begin position="214"/>
        <end position="237"/>
    </location>
</feature>
<feature type="topological domain" description="Extracellular" evidence="8">
    <location>
        <begin position="238"/>
        <end position="244"/>
    </location>
</feature>
<feature type="transmembrane region" description="Helical; Name=S2" evidence="2">
    <location>
        <begin position="245"/>
        <end position="265"/>
    </location>
</feature>
<feature type="topological domain" description="Cytoplasmic" evidence="8">
    <location>
        <begin position="266"/>
        <end position="294"/>
    </location>
</feature>
<feature type="transmembrane region" description="Helical; Name=S3" evidence="2">
    <location>
        <begin position="295"/>
        <end position="312"/>
    </location>
</feature>
<feature type="topological domain" description="Extracellular" evidence="8">
    <location>
        <begin position="313"/>
        <end position="315"/>
    </location>
</feature>
<feature type="transmembrane region" description="Helical; Name=S4" evidence="2">
    <location>
        <begin position="316"/>
        <end position="330"/>
    </location>
</feature>
<feature type="topological domain" description="Cytoplasmic" evidence="8">
    <location>
        <begin position="331"/>
        <end position="343"/>
    </location>
</feature>
<feature type="transmembrane region" description="Helical; Name=S5" evidence="2">
    <location>
        <begin position="344"/>
        <end position="366"/>
    </location>
</feature>
<feature type="topological domain" description="Extracellular" evidence="8">
    <location>
        <begin position="367"/>
        <end position="388"/>
    </location>
</feature>
<feature type="transmembrane region" description="Helical; Name=P-helix" evidence="2">
    <location>
        <begin position="389"/>
        <end position="415"/>
    </location>
</feature>
<feature type="transmembrane region" description="Helical; Name=S6" evidence="2">
    <location>
        <begin position="416"/>
        <end position="440"/>
    </location>
</feature>
<feature type="topological domain" description="Cytoplasmic" evidence="8">
    <location>
        <begin position="441"/>
        <end position="782"/>
    </location>
</feature>
<feature type="region of interest" description="Disordered" evidence="4">
    <location>
        <begin position="1"/>
        <end position="111"/>
    </location>
</feature>
<feature type="region of interest" description="Disordered" evidence="4">
    <location>
        <begin position="147"/>
        <end position="168"/>
    </location>
</feature>
<feature type="region of interest" description="Ion conduction pathway" evidence="2">
    <location>
        <begin position="343"/>
        <end position="442"/>
    </location>
</feature>
<feature type="region of interest" description="Selectivity filter" evidence="2">
    <location>
        <begin position="402"/>
        <end position="405"/>
    </location>
</feature>
<feature type="region of interest" description="C-linker" evidence="2">
    <location>
        <begin position="445"/>
        <end position="521"/>
    </location>
</feature>
<feature type="region of interest" description="Cyclic nucleotide-binding domain" evidence="2">
    <location>
        <begin position="525"/>
        <end position="641"/>
    </location>
</feature>
<feature type="region of interest" description="Disordered" evidence="4">
    <location>
        <begin position="692"/>
        <end position="724"/>
    </location>
</feature>
<feature type="compositionally biased region" description="Basic and acidic residues" evidence="4">
    <location>
        <begin position="13"/>
        <end position="25"/>
    </location>
</feature>
<feature type="compositionally biased region" description="Basic and acidic residues" evidence="4">
    <location>
        <begin position="57"/>
        <end position="73"/>
    </location>
</feature>
<feature type="compositionally biased region" description="Polar residues" evidence="4">
    <location>
        <begin position="74"/>
        <end position="83"/>
    </location>
</feature>
<feature type="compositionally biased region" description="Polar residues" evidence="4">
    <location>
        <begin position="152"/>
        <end position="168"/>
    </location>
</feature>
<feature type="compositionally biased region" description="Basic and acidic residues" evidence="4">
    <location>
        <begin position="705"/>
        <end position="724"/>
    </location>
</feature>
<feature type="binding site" evidence="2">
    <location>
        <position position="586"/>
    </location>
    <ligand>
        <name>3',5'-cyclic GMP</name>
        <dbReference type="ChEBI" id="CHEBI:57746"/>
    </ligand>
</feature>
<feature type="binding site" evidence="2">
    <location>
        <position position="587"/>
    </location>
    <ligand>
        <name>3',5'-cyclic GMP</name>
        <dbReference type="ChEBI" id="CHEBI:57746"/>
    </ligand>
</feature>
<feature type="binding site" evidence="2">
    <location>
        <position position="599"/>
    </location>
    <ligand>
        <name>3',5'-cyclic GMP</name>
        <dbReference type="ChEBI" id="CHEBI:57746"/>
    </ligand>
</feature>
<feature type="binding site" evidence="2">
    <location>
        <position position="600"/>
    </location>
    <ligand>
        <name>3',5'-cyclic GMP</name>
        <dbReference type="ChEBI" id="CHEBI:57746"/>
    </ligand>
</feature>
<feature type="site" description="Central gate" evidence="2">
    <location>
        <position position="429"/>
    </location>
</feature>
<feature type="site" description="Central gate" evidence="2">
    <location>
        <position position="433"/>
    </location>
</feature>
<feature type="sequence variant" description="In cd; in a German Shorthaired Pointer." evidence="5">
    <original>D</original>
    <variation>N</variation>
    <location>
        <position position="262"/>
    </location>
</feature>
<organism>
    <name type="scientific">Canis lupus familiaris</name>
    <name type="common">Dog</name>
    <name type="synonym">Canis familiaris</name>
    <dbReference type="NCBI Taxonomy" id="9615"/>
    <lineage>
        <taxon>Eukaryota</taxon>
        <taxon>Metazoa</taxon>
        <taxon>Chordata</taxon>
        <taxon>Craniata</taxon>
        <taxon>Vertebrata</taxon>
        <taxon>Euteleostomi</taxon>
        <taxon>Mammalia</taxon>
        <taxon>Eutheria</taxon>
        <taxon>Laurasiatheria</taxon>
        <taxon>Carnivora</taxon>
        <taxon>Caniformia</taxon>
        <taxon>Canidae</taxon>
        <taxon>Canis</taxon>
    </lineage>
</organism>
<name>CNGB3_CANLF</name>
<proteinExistence type="evidence at protein level"/>
<dbReference type="EMBL" id="AF490511">
    <property type="protein sequence ID" value="AAM89224.1"/>
    <property type="molecule type" value="mRNA"/>
</dbReference>
<dbReference type="EMBL" id="DQ497639">
    <property type="protein sequence ID" value="ABF58779.1"/>
    <property type="molecule type" value="Genomic_DNA"/>
</dbReference>
<dbReference type="RefSeq" id="NP_001003030.1">
    <property type="nucleotide sequence ID" value="NM_001003030.1"/>
</dbReference>
<dbReference type="SMR" id="Q8MJD7"/>
<dbReference type="FunCoup" id="Q8MJD7">
    <property type="interactions" value="11"/>
</dbReference>
<dbReference type="STRING" id="9615.ENSCAFP00000013075"/>
<dbReference type="PaxDb" id="9612-ENSCAFP00000036190"/>
<dbReference type="Ensembl" id="ENSCAFT00030046500.1">
    <property type="protein sequence ID" value="ENSCAFP00030040639.1"/>
    <property type="gene ID" value="ENSCAFG00030025193.1"/>
</dbReference>
<dbReference type="Ensembl" id="ENSCAFT00040041525.1">
    <property type="protein sequence ID" value="ENSCAFP00040036223.1"/>
    <property type="gene ID" value="ENSCAFG00040022330.1"/>
</dbReference>
<dbReference type="GeneID" id="403554"/>
<dbReference type="KEGG" id="cfa:403554"/>
<dbReference type="CTD" id="54714"/>
<dbReference type="eggNOG" id="KOG0499">
    <property type="taxonomic scope" value="Eukaryota"/>
</dbReference>
<dbReference type="InParanoid" id="Q8MJD7"/>
<dbReference type="OrthoDB" id="421226at2759"/>
<dbReference type="Proteomes" id="UP000002254">
    <property type="component" value="Unplaced"/>
</dbReference>
<dbReference type="Proteomes" id="UP000694429">
    <property type="component" value="Chromosome 29"/>
</dbReference>
<dbReference type="Proteomes" id="UP000694542">
    <property type="component" value="Chromosome 29"/>
</dbReference>
<dbReference type="Proteomes" id="UP000805418">
    <property type="component" value="Unplaced"/>
</dbReference>
<dbReference type="GO" id="GO:0017071">
    <property type="term" value="C:intracellular cyclic nucleotide activated cation channel complex"/>
    <property type="evidence" value="ECO:0000318"/>
    <property type="project" value="GO_Central"/>
</dbReference>
<dbReference type="GO" id="GO:0001750">
    <property type="term" value="C:photoreceptor outer segment"/>
    <property type="evidence" value="ECO:0000318"/>
    <property type="project" value="GO_Central"/>
</dbReference>
<dbReference type="GO" id="GO:0005886">
    <property type="term" value="C:plasma membrane"/>
    <property type="evidence" value="ECO:0000318"/>
    <property type="project" value="GO_Central"/>
</dbReference>
<dbReference type="GO" id="GO:0030553">
    <property type="term" value="F:cGMP binding"/>
    <property type="evidence" value="ECO:0000318"/>
    <property type="project" value="GO_Central"/>
</dbReference>
<dbReference type="GO" id="GO:0005222">
    <property type="term" value="F:intracellularly cAMP-activated cation channel activity"/>
    <property type="evidence" value="ECO:0000318"/>
    <property type="project" value="GO_Central"/>
</dbReference>
<dbReference type="GO" id="GO:0005223">
    <property type="term" value="F:intracellularly cGMP-activated cation channel activity"/>
    <property type="evidence" value="ECO:0000318"/>
    <property type="project" value="GO_Central"/>
</dbReference>
<dbReference type="GO" id="GO:0044877">
    <property type="term" value="F:protein-containing complex binding"/>
    <property type="evidence" value="ECO:0000318"/>
    <property type="project" value="GO_Central"/>
</dbReference>
<dbReference type="GO" id="GO:0098655">
    <property type="term" value="P:monoatomic cation transmembrane transport"/>
    <property type="evidence" value="ECO:0000318"/>
    <property type="project" value="GO_Central"/>
</dbReference>
<dbReference type="GO" id="GO:0007601">
    <property type="term" value="P:visual perception"/>
    <property type="evidence" value="ECO:0007669"/>
    <property type="project" value="UniProtKB-KW"/>
</dbReference>
<dbReference type="CDD" id="cd00038">
    <property type="entry name" value="CAP_ED"/>
    <property type="match status" value="1"/>
</dbReference>
<dbReference type="FunFam" id="1.10.287.70:FF:000072">
    <property type="entry name" value="Cyclic nucleotide gated channel beta 3"/>
    <property type="match status" value="1"/>
</dbReference>
<dbReference type="FunFam" id="1.10.287.630:FF:000001">
    <property type="entry name" value="Cyclic nucleotide-gated channel alpha 3"/>
    <property type="match status" value="1"/>
</dbReference>
<dbReference type="FunFam" id="2.60.120.10:FF:000020">
    <property type="entry name" value="Cyclic nucleotide-gated channel beta 3"/>
    <property type="match status" value="1"/>
</dbReference>
<dbReference type="Gene3D" id="1.10.287.70">
    <property type="match status" value="1"/>
</dbReference>
<dbReference type="Gene3D" id="1.10.287.630">
    <property type="entry name" value="Helix hairpin bin"/>
    <property type="match status" value="1"/>
</dbReference>
<dbReference type="Gene3D" id="2.60.120.10">
    <property type="entry name" value="Jelly Rolls"/>
    <property type="match status" value="1"/>
</dbReference>
<dbReference type="InterPro" id="IPR050866">
    <property type="entry name" value="CNG_cation_channel"/>
</dbReference>
<dbReference type="InterPro" id="IPR018488">
    <property type="entry name" value="cNMP-bd_CS"/>
</dbReference>
<dbReference type="InterPro" id="IPR000595">
    <property type="entry name" value="cNMP-bd_dom"/>
</dbReference>
<dbReference type="InterPro" id="IPR018490">
    <property type="entry name" value="cNMP-bd_dom_sf"/>
</dbReference>
<dbReference type="InterPro" id="IPR005821">
    <property type="entry name" value="Ion_trans_dom"/>
</dbReference>
<dbReference type="InterPro" id="IPR014710">
    <property type="entry name" value="RmlC-like_jellyroll"/>
</dbReference>
<dbReference type="PANTHER" id="PTHR45638:SF8">
    <property type="entry name" value="CYCLIC NUCLEOTIDE-GATED CATION CHANNEL BETA-3"/>
    <property type="match status" value="1"/>
</dbReference>
<dbReference type="PANTHER" id="PTHR45638">
    <property type="entry name" value="CYCLIC NUCLEOTIDE-GATED CATION CHANNEL SUBUNIT A"/>
    <property type="match status" value="1"/>
</dbReference>
<dbReference type="Pfam" id="PF00027">
    <property type="entry name" value="cNMP_binding"/>
    <property type="match status" value="1"/>
</dbReference>
<dbReference type="Pfam" id="PF00520">
    <property type="entry name" value="Ion_trans"/>
    <property type="match status" value="1"/>
</dbReference>
<dbReference type="SMART" id="SM00100">
    <property type="entry name" value="cNMP"/>
    <property type="match status" value="1"/>
</dbReference>
<dbReference type="SUPFAM" id="SSF51206">
    <property type="entry name" value="cAMP-binding domain-like"/>
    <property type="match status" value="1"/>
</dbReference>
<dbReference type="SUPFAM" id="SSF81324">
    <property type="entry name" value="Voltage-gated potassium channels"/>
    <property type="match status" value="1"/>
</dbReference>
<dbReference type="PROSITE" id="PS00888">
    <property type="entry name" value="CNMP_BINDING_1"/>
    <property type="match status" value="1"/>
</dbReference>
<dbReference type="PROSITE" id="PS00889">
    <property type="entry name" value="CNMP_BINDING_2"/>
    <property type="match status" value="1"/>
</dbReference>
<dbReference type="PROSITE" id="PS50042">
    <property type="entry name" value="CNMP_BINDING_3"/>
    <property type="match status" value="1"/>
</dbReference>
<accession>Q8MJD7</accession>
<accession>Q1G1Y4</accession>
<keyword id="KW-1003">Cell membrane</keyword>
<keyword id="KW-0140">cGMP</keyword>
<keyword id="KW-0142">cGMP-binding</keyword>
<keyword id="KW-0225">Disease variant</keyword>
<keyword id="KW-0407">Ion channel</keyword>
<keyword id="KW-0406">Ion transport</keyword>
<keyword id="KW-1071">Ligand-gated ion channel</keyword>
<keyword id="KW-0472">Membrane</keyword>
<keyword id="KW-0547">Nucleotide-binding</keyword>
<keyword id="KW-1185">Reference proteome</keyword>
<keyword id="KW-0716">Sensory transduction</keyword>
<keyword id="KW-0812">Transmembrane</keyword>
<keyword id="KW-1133">Transmembrane helix</keyword>
<keyword id="KW-0813">Transport</keyword>
<keyword id="KW-0844">Vision</keyword>
<comment type="function">
    <text evidence="2">Pore-forming subunit of the cone cyclic nucleotide-gated channel. Mediates cone photoresponses at bright light converting transient changes in intracellular cGMP levels into electrical signals. In the dark, cGMP levels are high and keep the channel open enabling a steady inward current carried by Na(+) and Ca(2+) ions that leads to membrane depolarization and neurotransmitter release from synaptic terminals. Upon photon absorption cGMP levels decline leading to channel closure and membrane hyperpolarization that ultimately slows neurotransmitter release and signals the presence of light, the end point of the phototransduction cascade. Conducts cGMP- and cAMP-gated ion currents, with permeability for monovalent and divalent cations.</text>
</comment>
<comment type="catalytic activity">
    <reaction evidence="1">
        <text>Ca(2+)(in) = Ca(2+)(out)</text>
        <dbReference type="Rhea" id="RHEA:29671"/>
        <dbReference type="ChEBI" id="CHEBI:29108"/>
    </reaction>
</comment>
<comment type="catalytic activity">
    <reaction evidence="2">
        <text>Na(+)(in) = Na(+)(out)</text>
        <dbReference type="Rhea" id="RHEA:34963"/>
        <dbReference type="ChEBI" id="CHEBI:29101"/>
    </reaction>
</comment>
<comment type="catalytic activity">
    <reaction evidence="2">
        <text>K(+)(in) = K(+)(out)</text>
        <dbReference type="Rhea" id="RHEA:29463"/>
        <dbReference type="ChEBI" id="CHEBI:29103"/>
    </reaction>
</comment>
<comment type="catalytic activity">
    <reaction evidence="2">
        <text>NH4(+)(in) = NH4(+)(out)</text>
        <dbReference type="Rhea" id="RHEA:28747"/>
        <dbReference type="ChEBI" id="CHEBI:28938"/>
    </reaction>
</comment>
<comment type="catalytic activity">
    <reaction evidence="2">
        <text>Rb(+)(in) = Rb(+)(out)</text>
        <dbReference type="Rhea" id="RHEA:78547"/>
        <dbReference type="ChEBI" id="CHEBI:49847"/>
    </reaction>
</comment>
<comment type="catalytic activity">
    <reaction evidence="2">
        <text>Li(+)(in) = Li(+)(out)</text>
        <dbReference type="Rhea" id="RHEA:78551"/>
        <dbReference type="ChEBI" id="CHEBI:49713"/>
    </reaction>
</comment>
<comment type="catalytic activity">
    <reaction evidence="2">
        <text>Cs(+)(in) = Cs(+)(out)</text>
        <dbReference type="Rhea" id="RHEA:78555"/>
        <dbReference type="ChEBI" id="CHEBI:49547"/>
    </reaction>
</comment>
<comment type="subunit">
    <text evidence="2">Forms heterotetrameric channels composed of CNGA3 and CNGB3 subunits with 3:1 stoichiometry.</text>
</comment>
<comment type="subcellular location">
    <subcellularLocation>
        <location evidence="2">Cell membrane</location>
        <topology evidence="3">Multi-pass membrane protein</topology>
    </subcellularLocation>
</comment>
<comment type="domain">
    <text evidence="2">The cyclic nucleotide-binding domain (CNBD) comprises three helices and a beta-roll of eight beta-strands from CNGA3 and CNGB3 subunits. Upon cNMP binding transmits the conformational changes to the C-linker domain of the S6 helix to open the ion conduction pathway.</text>
</comment>
<comment type="domain">
    <text evidence="2">The ion conduction pathway consists of S5, S6 and pore helices from CNGA3 and CNGB3 subunits. It contains a central hydrophobic gate that opens upon cNMP binding. CNGB1 displays an additional charged arginine gate below the central gate to regulate ion permeation.</text>
</comment>
<comment type="disease">
    <text evidence="5 6">Defects in CNGB3 are a cause of cone degeneration (cd). Cd is characterized by day-blindness and absence of retinal cone function. This autosomal recessive disorder occurs naturally in the Alaskan Malamute and German Shorthaired Pointer breeds.</text>
</comment>
<comment type="similarity">
    <text evidence="8">Belongs to the cyclic nucleotide-gated cation channel (TC 1.A.1.5) family. CNGB3 subfamily.</text>
</comment>